<sequence length="100" mass="11150">MHLTPREKDKLLIAMAAQVARRRLERGVKLNHPEAIALITDFVVEGARDGRSVAELMRDGGTVLTREQVMEGVPEMIHDVQVEATFPDGTKLVTVHNPIR</sequence>
<keyword id="KW-0963">Cytoplasm</keyword>
<keyword id="KW-0378">Hydrolase</keyword>
<keyword id="KW-1185">Reference proteome</keyword>
<protein>
    <recommendedName>
        <fullName evidence="1">Urease subunit gamma</fullName>
        <ecNumber evidence="1">3.5.1.5</ecNumber>
    </recommendedName>
    <alternativeName>
        <fullName evidence="1">Urea amidohydrolase subunit gamma</fullName>
    </alternativeName>
</protein>
<accession>Q0BQ42</accession>
<gene>
    <name evidence="1" type="primary">ureA</name>
    <name type="ordered locus">GbCGDNIH1_2162</name>
</gene>
<evidence type="ECO:0000255" key="1">
    <source>
        <dbReference type="HAMAP-Rule" id="MF_00739"/>
    </source>
</evidence>
<feature type="chain" id="PRO_1000046327" description="Urease subunit gamma">
    <location>
        <begin position="1"/>
        <end position="100"/>
    </location>
</feature>
<comment type="catalytic activity">
    <reaction evidence="1">
        <text>urea + 2 H2O + H(+) = hydrogencarbonate + 2 NH4(+)</text>
        <dbReference type="Rhea" id="RHEA:20557"/>
        <dbReference type="ChEBI" id="CHEBI:15377"/>
        <dbReference type="ChEBI" id="CHEBI:15378"/>
        <dbReference type="ChEBI" id="CHEBI:16199"/>
        <dbReference type="ChEBI" id="CHEBI:17544"/>
        <dbReference type="ChEBI" id="CHEBI:28938"/>
        <dbReference type="EC" id="3.5.1.5"/>
    </reaction>
</comment>
<comment type="pathway">
    <text evidence="1">Nitrogen metabolism; urea degradation; CO(2) and NH(3) from urea (urease route): step 1/1.</text>
</comment>
<comment type="subunit">
    <text evidence="1">Heterotrimer of UreA (gamma), UreB (beta) and UreC (alpha) subunits. Three heterotrimers associate to form the active enzyme.</text>
</comment>
<comment type="subcellular location">
    <subcellularLocation>
        <location evidence="1">Cytoplasm</location>
    </subcellularLocation>
</comment>
<comment type="similarity">
    <text evidence="1">Belongs to the urease gamma subunit family.</text>
</comment>
<dbReference type="EC" id="3.5.1.5" evidence="1"/>
<dbReference type="EMBL" id="CP000394">
    <property type="protein sequence ID" value="ABI63060.1"/>
    <property type="molecule type" value="Genomic_DNA"/>
</dbReference>
<dbReference type="RefSeq" id="WP_011632862.1">
    <property type="nucleotide sequence ID" value="NC_008343.2"/>
</dbReference>
<dbReference type="SMR" id="Q0BQ42"/>
<dbReference type="STRING" id="391165.GbCGDNIH1_2162"/>
<dbReference type="KEGG" id="gbe:GbCGDNIH1_2162"/>
<dbReference type="eggNOG" id="COG0831">
    <property type="taxonomic scope" value="Bacteria"/>
</dbReference>
<dbReference type="HOGENOM" id="CLU_145825_1_0_5"/>
<dbReference type="OrthoDB" id="9797217at2"/>
<dbReference type="UniPathway" id="UPA00258">
    <property type="reaction ID" value="UER00370"/>
</dbReference>
<dbReference type="Proteomes" id="UP000001963">
    <property type="component" value="Chromosome"/>
</dbReference>
<dbReference type="GO" id="GO:0005737">
    <property type="term" value="C:cytoplasm"/>
    <property type="evidence" value="ECO:0007669"/>
    <property type="project" value="UniProtKB-SubCell"/>
</dbReference>
<dbReference type="GO" id="GO:0016151">
    <property type="term" value="F:nickel cation binding"/>
    <property type="evidence" value="ECO:0007669"/>
    <property type="project" value="InterPro"/>
</dbReference>
<dbReference type="GO" id="GO:0009039">
    <property type="term" value="F:urease activity"/>
    <property type="evidence" value="ECO:0007669"/>
    <property type="project" value="UniProtKB-UniRule"/>
</dbReference>
<dbReference type="GO" id="GO:0043419">
    <property type="term" value="P:urea catabolic process"/>
    <property type="evidence" value="ECO:0007669"/>
    <property type="project" value="UniProtKB-UniRule"/>
</dbReference>
<dbReference type="CDD" id="cd00390">
    <property type="entry name" value="Urease_gamma"/>
    <property type="match status" value="1"/>
</dbReference>
<dbReference type="Gene3D" id="3.30.280.10">
    <property type="entry name" value="Urease, gamma-like subunit"/>
    <property type="match status" value="1"/>
</dbReference>
<dbReference type="HAMAP" id="MF_00739">
    <property type="entry name" value="Urease_gamma"/>
    <property type="match status" value="1"/>
</dbReference>
<dbReference type="InterPro" id="IPR012010">
    <property type="entry name" value="Urease_gamma"/>
</dbReference>
<dbReference type="InterPro" id="IPR002026">
    <property type="entry name" value="Urease_gamma/gamma-beta_su"/>
</dbReference>
<dbReference type="InterPro" id="IPR036463">
    <property type="entry name" value="Urease_gamma_sf"/>
</dbReference>
<dbReference type="InterPro" id="IPR050069">
    <property type="entry name" value="Urease_subunit"/>
</dbReference>
<dbReference type="NCBIfam" id="NF009712">
    <property type="entry name" value="PRK13241.1"/>
    <property type="match status" value="1"/>
</dbReference>
<dbReference type="NCBIfam" id="TIGR00193">
    <property type="entry name" value="urease_gam"/>
    <property type="match status" value="1"/>
</dbReference>
<dbReference type="PANTHER" id="PTHR33569">
    <property type="entry name" value="UREASE"/>
    <property type="match status" value="1"/>
</dbReference>
<dbReference type="PANTHER" id="PTHR33569:SF1">
    <property type="entry name" value="UREASE"/>
    <property type="match status" value="1"/>
</dbReference>
<dbReference type="Pfam" id="PF00547">
    <property type="entry name" value="Urease_gamma"/>
    <property type="match status" value="1"/>
</dbReference>
<dbReference type="PIRSF" id="PIRSF001223">
    <property type="entry name" value="Urease_gamma"/>
    <property type="match status" value="1"/>
</dbReference>
<dbReference type="SUPFAM" id="SSF54111">
    <property type="entry name" value="Urease, gamma-subunit"/>
    <property type="match status" value="1"/>
</dbReference>
<organism>
    <name type="scientific">Granulibacter bethesdensis (strain ATCC BAA-1260 / CGDNIH1)</name>
    <dbReference type="NCBI Taxonomy" id="391165"/>
    <lineage>
        <taxon>Bacteria</taxon>
        <taxon>Pseudomonadati</taxon>
        <taxon>Pseudomonadota</taxon>
        <taxon>Alphaproteobacteria</taxon>
        <taxon>Acetobacterales</taxon>
        <taxon>Acetobacteraceae</taxon>
        <taxon>Granulibacter</taxon>
    </lineage>
</organism>
<reference key="1">
    <citation type="journal article" date="2007" name="J. Bacteriol.">
        <title>Genome sequence analysis of the emerging human pathogenic acetic acid bacterium Granulibacter bethesdensis.</title>
        <authorList>
            <person name="Greenberg D.E."/>
            <person name="Porcella S.F."/>
            <person name="Zelazny A.M."/>
            <person name="Virtaneva K."/>
            <person name="Sturdevant D.E."/>
            <person name="Kupko J.J. III"/>
            <person name="Barbian K.D."/>
            <person name="Babar A."/>
            <person name="Dorward D.W."/>
            <person name="Holland S.M."/>
        </authorList>
    </citation>
    <scope>NUCLEOTIDE SEQUENCE [LARGE SCALE GENOMIC DNA]</scope>
    <source>
        <strain>ATCC BAA-1260 / CGDNIH1</strain>
    </source>
</reference>
<name>URE3_GRABC</name>
<proteinExistence type="inferred from homology"/>